<sequence>MAVTKLVLVRHGESQWNNENRFTGWYDVDLSEKGRSEAKAAGKLLKDEGFTFDFAYTSVLKRAIHTLWNILDELDQAWLPTEKTWKLNERHYGALQGLNKSETAEKYGDEQVKQWRRGFAITPPALEKSDERFPGHDPRYAKLTDAELPTTESLALTIERVIPYWNDVIKPRIASGERVIIAAHGNSLRALVKYLDDLGEDEILELNIPTGVPLVYEFDENFKPIKHYYLGNADEIAAKAAAVANQGKAK</sequence>
<protein>
    <recommendedName>
        <fullName evidence="2">2,3-bisphosphoglycerate-dependent phosphoglycerate mutase</fullName>
        <shortName evidence="2">BPG-dependent PGAM</shortName>
        <shortName evidence="2">PGAM</shortName>
        <shortName evidence="2">Phosphoglyceromutase</shortName>
        <shortName evidence="2">dPGM</shortName>
        <ecNumber evidence="2">5.4.2.11</ecNumber>
    </recommendedName>
</protein>
<organism>
    <name type="scientific">Yersinia pestis</name>
    <dbReference type="NCBI Taxonomy" id="632"/>
    <lineage>
        <taxon>Bacteria</taxon>
        <taxon>Pseudomonadati</taxon>
        <taxon>Pseudomonadota</taxon>
        <taxon>Gammaproteobacteria</taxon>
        <taxon>Enterobacterales</taxon>
        <taxon>Yersiniaceae</taxon>
        <taxon>Yersinia</taxon>
    </lineage>
</organism>
<keyword id="KW-0312">Gluconeogenesis</keyword>
<keyword id="KW-0324">Glycolysis</keyword>
<keyword id="KW-0413">Isomerase</keyword>
<keyword id="KW-1185">Reference proteome</keyword>
<feature type="initiator methionine" description="Removed" evidence="1">
    <location>
        <position position="1"/>
    </location>
</feature>
<feature type="chain" id="PRO_0000179942" description="2,3-bisphosphoglycerate-dependent phosphoglycerate mutase">
    <location>
        <begin position="2"/>
        <end position="250"/>
    </location>
</feature>
<feature type="active site" description="Tele-phosphohistidine intermediate" evidence="2">
    <location>
        <position position="11"/>
    </location>
</feature>
<feature type="active site" description="Proton donor/acceptor" evidence="2">
    <location>
        <position position="89"/>
    </location>
</feature>
<feature type="binding site" evidence="2">
    <location>
        <begin position="10"/>
        <end position="17"/>
    </location>
    <ligand>
        <name>substrate</name>
    </ligand>
</feature>
<feature type="binding site" evidence="2">
    <location>
        <begin position="23"/>
        <end position="24"/>
    </location>
    <ligand>
        <name>substrate</name>
    </ligand>
</feature>
<feature type="binding site" evidence="2">
    <location>
        <position position="62"/>
    </location>
    <ligand>
        <name>substrate</name>
    </ligand>
</feature>
<feature type="binding site" evidence="2">
    <location>
        <begin position="89"/>
        <end position="92"/>
    </location>
    <ligand>
        <name>substrate</name>
    </ligand>
</feature>
<feature type="binding site" evidence="2">
    <location>
        <position position="100"/>
    </location>
    <ligand>
        <name>substrate</name>
    </ligand>
</feature>
<feature type="binding site" evidence="2">
    <location>
        <begin position="116"/>
        <end position="117"/>
    </location>
    <ligand>
        <name>substrate</name>
    </ligand>
</feature>
<feature type="binding site" evidence="2">
    <location>
        <begin position="185"/>
        <end position="186"/>
    </location>
    <ligand>
        <name>substrate</name>
    </ligand>
</feature>
<feature type="site" description="Transition state stabilizer" evidence="2">
    <location>
        <position position="184"/>
    </location>
</feature>
<accession>Q8ZGY5</accession>
<accession>Q0WHR3</accession>
<name>GPMA_YERPE</name>
<comment type="function">
    <text evidence="2">Catalyzes the interconversion of 2-phosphoglycerate and 3-phosphoglycerate.</text>
</comment>
<comment type="catalytic activity">
    <reaction evidence="2">
        <text>(2R)-2-phosphoglycerate = (2R)-3-phosphoglycerate</text>
        <dbReference type="Rhea" id="RHEA:15901"/>
        <dbReference type="ChEBI" id="CHEBI:58272"/>
        <dbReference type="ChEBI" id="CHEBI:58289"/>
        <dbReference type="EC" id="5.4.2.11"/>
    </reaction>
</comment>
<comment type="pathway">
    <text evidence="2">Carbohydrate degradation; glycolysis; pyruvate from D-glyceraldehyde 3-phosphate: step 3/5.</text>
</comment>
<comment type="subunit">
    <text evidence="2">Homodimer.</text>
</comment>
<comment type="similarity">
    <text evidence="2">Belongs to the phosphoglycerate mutase family. BPG-dependent PGAM subfamily.</text>
</comment>
<comment type="sequence caution" evidence="3">
    <conflict type="erroneous initiation">
        <sequence resource="EMBL-CDS" id="AAM86598"/>
    </conflict>
    <text>Extended N-terminus.</text>
</comment>
<comment type="sequence caution" evidence="3">
    <conflict type="erroneous initiation">
        <sequence resource="EMBL-CDS" id="AAS61275"/>
    </conflict>
    <text>Extended N-terminus.</text>
</comment>
<evidence type="ECO:0000250" key="1"/>
<evidence type="ECO:0000255" key="2">
    <source>
        <dbReference type="HAMAP-Rule" id="MF_01039"/>
    </source>
</evidence>
<evidence type="ECO:0000305" key="3"/>
<proteinExistence type="inferred from homology"/>
<gene>
    <name evidence="2" type="primary">gpmA</name>
    <name type="ordered locus">YPO1133</name>
    <name type="ordered locus">y3048</name>
    <name type="ordered locus">YP_1025</name>
</gene>
<reference key="1">
    <citation type="journal article" date="2001" name="Nature">
        <title>Genome sequence of Yersinia pestis, the causative agent of plague.</title>
        <authorList>
            <person name="Parkhill J."/>
            <person name="Wren B.W."/>
            <person name="Thomson N.R."/>
            <person name="Titball R.W."/>
            <person name="Holden M.T.G."/>
            <person name="Prentice M.B."/>
            <person name="Sebaihia M."/>
            <person name="James K.D."/>
            <person name="Churcher C.M."/>
            <person name="Mungall K.L."/>
            <person name="Baker S."/>
            <person name="Basham D."/>
            <person name="Bentley S.D."/>
            <person name="Brooks K."/>
            <person name="Cerdeno-Tarraga A.-M."/>
            <person name="Chillingworth T."/>
            <person name="Cronin A."/>
            <person name="Davies R.M."/>
            <person name="Davis P."/>
            <person name="Dougan G."/>
            <person name="Feltwell T."/>
            <person name="Hamlin N."/>
            <person name="Holroyd S."/>
            <person name="Jagels K."/>
            <person name="Karlyshev A.V."/>
            <person name="Leather S."/>
            <person name="Moule S."/>
            <person name="Oyston P.C.F."/>
            <person name="Quail M.A."/>
            <person name="Rutherford K.M."/>
            <person name="Simmonds M."/>
            <person name="Skelton J."/>
            <person name="Stevens K."/>
            <person name="Whitehead S."/>
            <person name="Barrell B.G."/>
        </authorList>
    </citation>
    <scope>NUCLEOTIDE SEQUENCE [LARGE SCALE GENOMIC DNA]</scope>
    <source>
        <strain>CO-92 / Biovar Orientalis</strain>
    </source>
</reference>
<reference key="2">
    <citation type="journal article" date="2002" name="J. Bacteriol.">
        <title>Genome sequence of Yersinia pestis KIM.</title>
        <authorList>
            <person name="Deng W."/>
            <person name="Burland V."/>
            <person name="Plunkett G. III"/>
            <person name="Boutin A."/>
            <person name="Mayhew G.F."/>
            <person name="Liss P."/>
            <person name="Perna N.T."/>
            <person name="Rose D.J."/>
            <person name="Mau B."/>
            <person name="Zhou S."/>
            <person name="Schwartz D.C."/>
            <person name="Fetherston J.D."/>
            <person name="Lindler L.E."/>
            <person name="Brubaker R.R."/>
            <person name="Plano G.V."/>
            <person name="Straley S.C."/>
            <person name="McDonough K.A."/>
            <person name="Nilles M.L."/>
            <person name="Matson J.S."/>
            <person name="Blattner F.R."/>
            <person name="Perry R.D."/>
        </authorList>
    </citation>
    <scope>NUCLEOTIDE SEQUENCE [LARGE SCALE GENOMIC DNA]</scope>
    <source>
        <strain>KIM10+ / Biovar Mediaevalis</strain>
    </source>
</reference>
<reference key="3">
    <citation type="journal article" date="2004" name="DNA Res.">
        <title>Complete genome sequence of Yersinia pestis strain 91001, an isolate avirulent to humans.</title>
        <authorList>
            <person name="Song Y."/>
            <person name="Tong Z."/>
            <person name="Wang J."/>
            <person name="Wang L."/>
            <person name="Guo Z."/>
            <person name="Han Y."/>
            <person name="Zhang J."/>
            <person name="Pei D."/>
            <person name="Zhou D."/>
            <person name="Qin H."/>
            <person name="Pang X."/>
            <person name="Han Y."/>
            <person name="Zhai J."/>
            <person name="Li M."/>
            <person name="Cui B."/>
            <person name="Qi Z."/>
            <person name="Jin L."/>
            <person name="Dai R."/>
            <person name="Chen F."/>
            <person name="Li S."/>
            <person name="Ye C."/>
            <person name="Du Z."/>
            <person name="Lin W."/>
            <person name="Wang J."/>
            <person name="Yu J."/>
            <person name="Yang H."/>
            <person name="Wang J."/>
            <person name="Huang P."/>
            <person name="Yang R."/>
        </authorList>
    </citation>
    <scope>NUCLEOTIDE SEQUENCE [LARGE SCALE GENOMIC DNA]</scope>
    <source>
        <strain>91001 / Biovar Mediaevalis</strain>
    </source>
</reference>
<dbReference type="EC" id="5.4.2.11" evidence="2"/>
<dbReference type="EMBL" id="AL590842">
    <property type="protein sequence ID" value="CAL19799.1"/>
    <property type="molecule type" value="Genomic_DNA"/>
</dbReference>
<dbReference type="EMBL" id="AE009952">
    <property type="protein sequence ID" value="AAM86598.1"/>
    <property type="status" value="ALT_INIT"/>
    <property type="molecule type" value="Genomic_DNA"/>
</dbReference>
<dbReference type="EMBL" id="AE017042">
    <property type="protein sequence ID" value="AAS61275.1"/>
    <property type="status" value="ALT_INIT"/>
    <property type="molecule type" value="Genomic_DNA"/>
</dbReference>
<dbReference type="PIR" id="AE0139">
    <property type="entry name" value="AE0139"/>
</dbReference>
<dbReference type="RefSeq" id="WP_002210746.1">
    <property type="nucleotide sequence ID" value="NZ_WHLN01000020.1"/>
</dbReference>
<dbReference type="RefSeq" id="YP_002346175.1">
    <property type="nucleotide sequence ID" value="NC_003143.1"/>
</dbReference>
<dbReference type="SMR" id="Q8ZGY5"/>
<dbReference type="IntAct" id="Q8ZGY5">
    <property type="interactions" value="3"/>
</dbReference>
<dbReference type="STRING" id="214092.YPO1133"/>
<dbReference type="PaxDb" id="214092-YPO1133"/>
<dbReference type="DNASU" id="1147995"/>
<dbReference type="EnsemblBacteria" id="AAS61275">
    <property type="protein sequence ID" value="AAS61275"/>
    <property type="gene ID" value="YP_1025"/>
</dbReference>
<dbReference type="GeneID" id="57977273"/>
<dbReference type="KEGG" id="ype:YPO1133"/>
<dbReference type="KEGG" id="ypk:y3048"/>
<dbReference type="KEGG" id="ypm:YP_1025"/>
<dbReference type="PATRIC" id="fig|214092.21.peg.1427"/>
<dbReference type="eggNOG" id="COG0588">
    <property type="taxonomic scope" value="Bacteria"/>
</dbReference>
<dbReference type="HOGENOM" id="CLU_033323_1_1_6"/>
<dbReference type="OMA" id="MLPYWYD"/>
<dbReference type="OrthoDB" id="9781415at2"/>
<dbReference type="UniPathway" id="UPA00109">
    <property type="reaction ID" value="UER00186"/>
</dbReference>
<dbReference type="Proteomes" id="UP000000815">
    <property type="component" value="Chromosome"/>
</dbReference>
<dbReference type="Proteomes" id="UP000001019">
    <property type="component" value="Chromosome"/>
</dbReference>
<dbReference type="Proteomes" id="UP000002490">
    <property type="component" value="Chromosome"/>
</dbReference>
<dbReference type="GO" id="GO:0004619">
    <property type="term" value="F:phosphoglycerate mutase activity"/>
    <property type="evidence" value="ECO:0007669"/>
    <property type="project" value="UniProtKB-EC"/>
</dbReference>
<dbReference type="GO" id="GO:0006094">
    <property type="term" value="P:gluconeogenesis"/>
    <property type="evidence" value="ECO:0007669"/>
    <property type="project" value="UniProtKB-UniRule"/>
</dbReference>
<dbReference type="GO" id="GO:0006096">
    <property type="term" value="P:glycolytic process"/>
    <property type="evidence" value="ECO:0007669"/>
    <property type="project" value="UniProtKB-UniRule"/>
</dbReference>
<dbReference type="CDD" id="cd07067">
    <property type="entry name" value="HP_PGM_like"/>
    <property type="match status" value="1"/>
</dbReference>
<dbReference type="FunFam" id="3.40.50.1240:FF:000003">
    <property type="entry name" value="2,3-bisphosphoglycerate-dependent phosphoglycerate mutase"/>
    <property type="match status" value="1"/>
</dbReference>
<dbReference type="Gene3D" id="3.40.50.1240">
    <property type="entry name" value="Phosphoglycerate mutase-like"/>
    <property type="match status" value="1"/>
</dbReference>
<dbReference type="HAMAP" id="MF_01039">
    <property type="entry name" value="PGAM_GpmA"/>
    <property type="match status" value="1"/>
</dbReference>
<dbReference type="InterPro" id="IPR013078">
    <property type="entry name" value="His_Pase_superF_clade-1"/>
</dbReference>
<dbReference type="InterPro" id="IPR029033">
    <property type="entry name" value="His_PPase_superfam"/>
</dbReference>
<dbReference type="InterPro" id="IPR001345">
    <property type="entry name" value="PG/BPGM_mutase_AS"/>
</dbReference>
<dbReference type="InterPro" id="IPR005952">
    <property type="entry name" value="Phosphogly_mut1"/>
</dbReference>
<dbReference type="NCBIfam" id="TIGR01258">
    <property type="entry name" value="pgm_1"/>
    <property type="match status" value="1"/>
</dbReference>
<dbReference type="NCBIfam" id="NF010713">
    <property type="entry name" value="PRK14115.1"/>
    <property type="match status" value="1"/>
</dbReference>
<dbReference type="PANTHER" id="PTHR11931">
    <property type="entry name" value="PHOSPHOGLYCERATE MUTASE"/>
    <property type="match status" value="1"/>
</dbReference>
<dbReference type="Pfam" id="PF00300">
    <property type="entry name" value="His_Phos_1"/>
    <property type="match status" value="1"/>
</dbReference>
<dbReference type="PIRSF" id="PIRSF000709">
    <property type="entry name" value="6PFK_2-Ptase"/>
    <property type="match status" value="1"/>
</dbReference>
<dbReference type="SMART" id="SM00855">
    <property type="entry name" value="PGAM"/>
    <property type="match status" value="1"/>
</dbReference>
<dbReference type="SUPFAM" id="SSF53254">
    <property type="entry name" value="Phosphoglycerate mutase-like"/>
    <property type="match status" value="1"/>
</dbReference>
<dbReference type="PROSITE" id="PS00175">
    <property type="entry name" value="PG_MUTASE"/>
    <property type="match status" value="1"/>
</dbReference>